<protein>
    <recommendedName>
        <fullName>Keratin-associated protein 22-2</fullName>
    </recommendedName>
</protein>
<feature type="chain" id="PRO_0000336084" description="Keratin-associated protein 22-2">
    <location>
        <begin position="1"/>
        <end position="45"/>
    </location>
</feature>
<accession>Q3LI68</accession>
<reference key="1">
    <citation type="submission" date="2002-11" db="EMBL/GenBank/DDBJ databases">
        <title>Identification of complete keratin-associated protein (KAP) gene cluster spanning 800 kb region on human chromosome 21q22.11.</title>
        <authorList>
            <person name="Obayashi I."/>
            <person name="Shibuya K."/>
            <person name="Minoshima S."/>
            <person name="Kudoh J."/>
            <person name="Shimizu N."/>
        </authorList>
    </citation>
    <scope>NUCLEOTIDE SEQUENCE [MRNA]</scope>
    <source>
        <tissue>Hair root</tissue>
    </source>
</reference>
<dbReference type="EMBL" id="AB096950">
    <property type="protein sequence ID" value="BAE46365.1"/>
    <property type="molecule type" value="mRNA"/>
</dbReference>
<dbReference type="CCDS" id="CCDS46641.1"/>
<dbReference type="RefSeq" id="NP_001157906.1">
    <property type="nucleotide sequence ID" value="NM_001164434.1"/>
</dbReference>
<dbReference type="BioMuta" id="KRTAP22-2"/>
<dbReference type="PaxDb" id="9606-ENSP00000372281"/>
<dbReference type="Antibodypedia" id="81639">
    <property type="antibodies" value="1 antibodies from 1 providers"/>
</dbReference>
<dbReference type="DNASU" id="100288287"/>
<dbReference type="Ensembl" id="ENST00000382830.2">
    <property type="protein sequence ID" value="ENSP00000372281.2"/>
    <property type="gene ID" value="ENSG00000206106.2"/>
</dbReference>
<dbReference type="GeneID" id="100288287"/>
<dbReference type="KEGG" id="hsa:100288287"/>
<dbReference type="MANE-Select" id="ENST00000382830.2">
    <property type="protein sequence ID" value="ENSP00000372281.2"/>
    <property type="RefSeq nucleotide sequence ID" value="NM_001164434.1"/>
    <property type="RefSeq protein sequence ID" value="NP_001157906.1"/>
</dbReference>
<dbReference type="UCSC" id="uc021wih.1">
    <property type="organism name" value="human"/>
</dbReference>
<dbReference type="AGR" id="HGNC:37091"/>
<dbReference type="CTD" id="100288287"/>
<dbReference type="GeneCards" id="KRTAP22-2"/>
<dbReference type="HGNC" id="HGNC:37091">
    <property type="gene designation" value="KRTAP22-2"/>
</dbReference>
<dbReference type="HPA" id="ENSG00000206106">
    <property type="expression patterns" value="Not detected"/>
</dbReference>
<dbReference type="neXtProt" id="NX_Q3LI68"/>
<dbReference type="PharmGKB" id="PA165378424"/>
<dbReference type="VEuPathDB" id="HostDB:ENSG00000206106"/>
<dbReference type="eggNOG" id="ENOG502TFXJ">
    <property type="taxonomic scope" value="Eukaryota"/>
</dbReference>
<dbReference type="GeneTree" id="ENSGT00530000065184"/>
<dbReference type="HOGENOM" id="CLU_184630_2_0_1"/>
<dbReference type="InParanoid" id="Q3LI68"/>
<dbReference type="OrthoDB" id="9512120at2759"/>
<dbReference type="PAN-GO" id="Q3LI68">
    <property type="GO annotations" value="0 GO annotations based on evolutionary models"/>
</dbReference>
<dbReference type="PhylomeDB" id="Q3LI68"/>
<dbReference type="TreeFam" id="TF339853"/>
<dbReference type="BioGRID-ORCS" id="100288287">
    <property type="hits" value="15 hits in 1101 CRISPR screens"/>
</dbReference>
<dbReference type="Pharos" id="Q3LI68">
    <property type="development level" value="Tdark"/>
</dbReference>
<dbReference type="PRO" id="PR:Q3LI68"/>
<dbReference type="Proteomes" id="UP000005640">
    <property type="component" value="Chromosome 21"/>
</dbReference>
<dbReference type="Bgee" id="ENSG00000206106">
    <property type="expression patterns" value="Expressed in primordial germ cell in gonad and 12 other cell types or tissues"/>
</dbReference>
<dbReference type="GO" id="GO:0005882">
    <property type="term" value="C:intermediate filament"/>
    <property type="evidence" value="ECO:0007669"/>
    <property type="project" value="UniProtKB-KW"/>
</dbReference>
<name>KR222_HUMAN</name>
<sequence>MCYYHNYYGSLDYGCSYGSEYGNSGYACNFPCSYGRFLLAPRKKF</sequence>
<evidence type="ECO:0000250" key="1"/>
<evidence type="ECO:0000305" key="2"/>
<gene>
    <name type="primary">KRTAP22-2</name>
    <name type="synonym">KAP22.2</name>
</gene>
<proteinExistence type="inferred from homology"/>
<organism>
    <name type="scientific">Homo sapiens</name>
    <name type="common">Human</name>
    <dbReference type="NCBI Taxonomy" id="9606"/>
    <lineage>
        <taxon>Eukaryota</taxon>
        <taxon>Metazoa</taxon>
        <taxon>Chordata</taxon>
        <taxon>Craniata</taxon>
        <taxon>Vertebrata</taxon>
        <taxon>Euteleostomi</taxon>
        <taxon>Mammalia</taxon>
        <taxon>Eutheria</taxon>
        <taxon>Euarchontoglires</taxon>
        <taxon>Primates</taxon>
        <taxon>Haplorrhini</taxon>
        <taxon>Catarrhini</taxon>
        <taxon>Hominidae</taxon>
        <taxon>Homo</taxon>
    </lineage>
</organism>
<keyword id="KW-0416">Keratin</keyword>
<keyword id="KW-1185">Reference proteome</keyword>
<comment type="function">
    <text evidence="1">In the hair cortex, hair keratin intermediate filaments are embedded in an interfilamentous matrix, consisting of hair keratin-associated proteins (KRTAP), which are essential for the formation of a rigid and resistant hair shaft through their extensive disulfide bond cross-linking with abundant cysteine residues of hair keratins. The matrix proteins include the high-sulfur and high-glycine-tyrosine keratins (By similarity).</text>
</comment>
<comment type="subunit">
    <text evidence="1">Interacts with hair keratins.</text>
</comment>
<comment type="similarity">
    <text evidence="2">Belongs to the KRTAP type 20 family.</text>
</comment>